<protein>
    <recommendedName>
        <fullName evidence="1">D-aminoacyl-tRNA deacylase</fullName>
        <shortName evidence="1">DTD</shortName>
        <ecNumber evidence="1">3.1.1.96</ecNumber>
    </recommendedName>
    <alternativeName>
        <fullName evidence="1">Gly-tRNA(Ala) deacylase</fullName>
    </alternativeName>
</protein>
<keyword id="KW-0963">Cytoplasm</keyword>
<keyword id="KW-0378">Hydrolase</keyword>
<keyword id="KW-1185">Reference proteome</keyword>
<keyword id="KW-0694">RNA-binding</keyword>
<keyword id="KW-0820">tRNA-binding</keyword>
<sequence>MLSIIQRVNCAKVVVDNQKVADINKGILALVCVEKEDTQQNFEKMADKIIKYRIFEDDAGKMNLSLVDIDAEIILVPQFTLAADTKKGNRPSFSSGCPPEIAKEKFKEFENIFRRKYNKVQTGIFGADMKVSLTNDGPVTFSFKI</sequence>
<name>DTD_FRATH</name>
<reference key="1">
    <citation type="submission" date="2006-03" db="EMBL/GenBank/DDBJ databases">
        <title>Complete genome sequence of Francisella tularensis LVS (Live Vaccine Strain).</title>
        <authorList>
            <person name="Chain P."/>
            <person name="Larimer F."/>
            <person name="Land M."/>
            <person name="Stilwagen S."/>
            <person name="Larsson P."/>
            <person name="Bearden S."/>
            <person name="Chu M."/>
            <person name="Oyston P."/>
            <person name="Forsman M."/>
            <person name="Andersson S."/>
            <person name="Lindler L."/>
            <person name="Titball R."/>
            <person name="Garcia E."/>
        </authorList>
    </citation>
    <scope>NUCLEOTIDE SEQUENCE [LARGE SCALE GENOMIC DNA]</scope>
    <source>
        <strain>LVS</strain>
    </source>
</reference>
<gene>
    <name evidence="1" type="primary">dtd</name>
    <name type="ordered locus">FTL_0049</name>
</gene>
<accession>Q2A5Z4</accession>
<dbReference type="EC" id="3.1.1.96" evidence="1"/>
<dbReference type="EMBL" id="AM233362">
    <property type="protein sequence ID" value="CAJ78490.1"/>
    <property type="molecule type" value="Genomic_DNA"/>
</dbReference>
<dbReference type="RefSeq" id="WP_003017627.1">
    <property type="nucleotide sequence ID" value="NZ_CP009694.1"/>
</dbReference>
<dbReference type="SMR" id="Q2A5Z4"/>
<dbReference type="KEGG" id="ftl:FTL_0049"/>
<dbReference type="Proteomes" id="UP000001944">
    <property type="component" value="Chromosome"/>
</dbReference>
<dbReference type="GO" id="GO:0005737">
    <property type="term" value="C:cytoplasm"/>
    <property type="evidence" value="ECO:0007669"/>
    <property type="project" value="UniProtKB-SubCell"/>
</dbReference>
<dbReference type="GO" id="GO:0051500">
    <property type="term" value="F:D-tyrosyl-tRNA(Tyr) deacylase activity"/>
    <property type="evidence" value="ECO:0007669"/>
    <property type="project" value="TreeGrafter"/>
</dbReference>
<dbReference type="GO" id="GO:0106026">
    <property type="term" value="F:Gly-tRNA(Ala) deacylase activity"/>
    <property type="evidence" value="ECO:0007669"/>
    <property type="project" value="UniProtKB-UniRule"/>
</dbReference>
<dbReference type="GO" id="GO:0043908">
    <property type="term" value="F:Ser(Gly)-tRNA(Ala) hydrolase activity"/>
    <property type="evidence" value="ECO:0007669"/>
    <property type="project" value="UniProtKB-UniRule"/>
</dbReference>
<dbReference type="GO" id="GO:0000049">
    <property type="term" value="F:tRNA binding"/>
    <property type="evidence" value="ECO:0007669"/>
    <property type="project" value="UniProtKB-UniRule"/>
</dbReference>
<dbReference type="GO" id="GO:0019478">
    <property type="term" value="P:D-amino acid catabolic process"/>
    <property type="evidence" value="ECO:0007669"/>
    <property type="project" value="UniProtKB-UniRule"/>
</dbReference>
<dbReference type="FunFam" id="3.50.80.10:FF:000001">
    <property type="entry name" value="D-aminoacyl-tRNA deacylase"/>
    <property type="match status" value="1"/>
</dbReference>
<dbReference type="Gene3D" id="3.50.80.10">
    <property type="entry name" value="D-tyrosyl-tRNA(Tyr) deacylase"/>
    <property type="match status" value="1"/>
</dbReference>
<dbReference type="HAMAP" id="MF_00518">
    <property type="entry name" value="Deacylase_Dtd"/>
    <property type="match status" value="1"/>
</dbReference>
<dbReference type="InterPro" id="IPR003732">
    <property type="entry name" value="Daa-tRNA_deacyls_DTD"/>
</dbReference>
<dbReference type="InterPro" id="IPR023509">
    <property type="entry name" value="DTD-like_sf"/>
</dbReference>
<dbReference type="NCBIfam" id="TIGR00256">
    <property type="entry name" value="D-aminoacyl-tRNA deacylase"/>
    <property type="match status" value="1"/>
</dbReference>
<dbReference type="PANTHER" id="PTHR10472:SF5">
    <property type="entry name" value="D-AMINOACYL-TRNA DEACYLASE 1"/>
    <property type="match status" value="1"/>
</dbReference>
<dbReference type="PANTHER" id="PTHR10472">
    <property type="entry name" value="D-TYROSYL-TRNA TYR DEACYLASE"/>
    <property type="match status" value="1"/>
</dbReference>
<dbReference type="Pfam" id="PF02580">
    <property type="entry name" value="Tyr_Deacylase"/>
    <property type="match status" value="1"/>
</dbReference>
<dbReference type="SUPFAM" id="SSF69500">
    <property type="entry name" value="DTD-like"/>
    <property type="match status" value="1"/>
</dbReference>
<feature type="chain" id="PRO_0000259283" description="D-aminoacyl-tRNA deacylase">
    <location>
        <begin position="1"/>
        <end position="145"/>
    </location>
</feature>
<feature type="short sequence motif" description="Gly-cisPro motif, important for rejection of L-amino acids" evidence="1">
    <location>
        <begin position="137"/>
        <end position="138"/>
    </location>
</feature>
<organism>
    <name type="scientific">Francisella tularensis subsp. holarctica (strain LVS)</name>
    <dbReference type="NCBI Taxonomy" id="376619"/>
    <lineage>
        <taxon>Bacteria</taxon>
        <taxon>Pseudomonadati</taxon>
        <taxon>Pseudomonadota</taxon>
        <taxon>Gammaproteobacteria</taxon>
        <taxon>Thiotrichales</taxon>
        <taxon>Francisellaceae</taxon>
        <taxon>Francisella</taxon>
    </lineage>
</organism>
<comment type="function">
    <text evidence="1">An aminoacyl-tRNA editing enzyme that deacylates mischarged D-aminoacyl-tRNAs. Also deacylates mischarged glycyl-tRNA(Ala), protecting cells against glycine mischarging by AlaRS. Acts via tRNA-based rather than protein-based catalysis; rejects L-amino acids rather than detecting D-amino acids in the active site. By recycling D-aminoacyl-tRNA to D-amino acids and free tRNA molecules, this enzyme counteracts the toxicity associated with the formation of D-aminoacyl-tRNA entities in vivo and helps enforce protein L-homochirality.</text>
</comment>
<comment type="catalytic activity">
    <reaction evidence="1">
        <text>glycyl-tRNA(Ala) + H2O = tRNA(Ala) + glycine + H(+)</text>
        <dbReference type="Rhea" id="RHEA:53744"/>
        <dbReference type="Rhea" id="RHEA-COMP:9657"/>
        <dbReference type="Rhea" id="RHEA-COMP:13640"/>
        <dbReference type="ChEBI" id="CHEBI:15377"/>
        <dbReference type="ChEBI" id="CHEBI:15378"/>
        <dbReference type="ChEBI" id="CHEBI:57305"/>
        <dbReference type="ChEBI" id="CHEBI:78442"/>
        <dbReference type="ChEBI" id="CHEBI:78522"/>
        <dbReference type="EC" id="3.1.1.96"/>
    </reaction>
</comment>
<comment type="catalytic activity">
    <reaction evidence="1">
        <text>a D-aminoacyl-tRNA + H2O = a tRNA + a D-alpha-amino acid + H(+)</text>
        <dbReference type="Rhea" id="RHEA:13953"/>
        <dbReference type="Rhea" id="RHEA-COMP:10123"/>
        <dbReference type="Rhea" id="RHEA-COMP:10124"/>
        <dbReference type="ChEBI" id="CHEBI:15377"/>
        <dbReference type="ChEBI" id="CHEBI:15378"/>
        <dbReference type="ChEBI" id="CHEBI:59871"/>
        <dbReference type="ChEBI" id="CHEBI:78442"/>
        <dbReference type="ChEBI" id="CHEBI:79333"/>
        <dbReference type="EC" id="3.1.1.96"/>
    </reaction>
</comment>
<comment type="subunit">
    <text evidence="1">Homodimer.</text>
</comment>
<comment type="subcellular location">
    <subcellularLocation>
        <location evidence="1">Cytoplasm</location>
    </subcellularLocation>
</comment>
<comment type="domain">
    <text evidence="1">A Gly-cisPro motif from one monomer fits into the active site of the other monomer to allow specific chiral rejection of L-amino acids.</text>
</comment>
<comment type="similarity">
    <text evidence="1">Belongs to the DTD family.</text>
</comment>
<proteinExistence type="inferred from homology"/>
<evidence type="ECO:0000255" key="1">
    <source>
        <dbReference type="HAMAP-Rule" id="MF_00518"/>
    </source>
</evidence>